<proteinExistence type="inferred from homology"/>
<dbReference type="EC" id="3.1.21.10" evidence="1"/>
<dbReference type="EMBL" id="CP001010">
    <property type="protein sequence ID" value="ACB44659.1"/>
    <property type="molecule type" value="Genomic_DNA"/>
</dbReference>
<dbReference type="SMR" id="B1XS24"/>
<dbReference type="STRING" id="452638.Pnec_1582"/>
<dbReference type="KEGG" id="pne:Pnec_1582"/>
<dbReference type="eggNOG" id="COG0817">
    <property type="taxonomic scope" value="Bacteria"/>
</dbReference>
<dbReference type="HOGENOM" id="CLU_091257_3_1_4"/>
<dbReference type="OrthoDB" id="9805499at2"/>
<dbReference type="GO" id="GO:0005737">
    <property type="term" value="C:cytoplasm"/>
    <property type="evidence" value="ECO:0007669"/>
    <property type="project" value="UniProtKB-SubCell"/>
</dbReference>
<dbReference type="GO" id="GO:0048476">
    <property type="term" value="C:Holliday junction resolvase complex"/>
    <property type="evidence" value="ECO:0007669"/>
    <property type="project" value="UniProtKB-UniRule"/>
</dbReference>
<dbReference type="GO" id="GO:0008821">
    <property type="term" value="F:crossover junction DNA endonuclease activity"/>
    <property type="evidence" value="ECO:0007669"/>
    <property type="project" value="UniProtKB-UniRule"/>
</dbReference>
<dbReference type="GO" id="GO:0003677">
    <property type="term" value="F:DNA binding"/>
    <property type="evidence" value="ECO:0007669"/>
    <property type="project" value="UniProtKB-KW"/>
</dbReference>
<dbReference type="GO" id="GO:0000287">
    <property type="term" value="F:magnesium ion binding"/>
    <property type="evidence" value="ECO:0007669"/>
    <property type="project" value="UniProtKB-UniRule"/>
</dbReference>
<dbReference type="GO" id="GO:0006310">
    <property type="term" value="P:DNA recombination"/>
    <property type="evidence" value="ECO:0007669"/>
    <property type="project" value="UniProtKB-UniRule"/>
</dbReference>
<dbReference type="GO" id="GO:0006281">
    <property type="term" value="P:DNA repair"/>
    <property type="evidence" value="ECO:0007669"/>
    <property type="project" value="UniProtKB-UniRule"/>
</dbReference>
<dbReference type="CDD" id="cd16962">
    <property type="entry name" value="RuvC"/>
    <property type="match status" value="1"/>
</dbReference>
<dbReference type="FunFam" id="3.30.420.10:FF:000002">
    <property type="entry name" value="Crossover junction endodeoxyribonuclease RuvC"/>
    <property type="match status" value="1"/>
</dbReference>
<dbReference type="Gene3D" id="3.30.420.10">
    <property type="entry name" value="Ribonuclease H-like superfamily/Ribonuclease H"/>
    <property type="match status" value="1"/>
</dbReference>
<dbReference type="HAMAP" id="MF_00034">
    <property type="entry name" value="RuvC"/>
    <property type="match status" value="1"/>
</dbReference>
<dbReference type="InterPro" id="IPR012337">
    <property type="entry name" value="RNaseH-like_sf"/>
</dbReference>
<dbReference type="InterPro" id="IPR036397">
    <property type="entry name" value="RNaseH_sf"/>
</dbReference>
<dbReference type="InterPro" id="IPR020563">
    <property type="entry name" value="X-over_junc_endoDNase_Mg_BS"/>
</dbReference>
<dbReference type="InterPro" id="IPR002176">
    <property type="entry name" value="X-over_junc_endoDNase_RuvC"/>
</dbReference>
<dbReference type="NCBIfam" id="TIGR00228">
    <property type="entry name" value="ruvC"/>
    <property type="match status" value="1"/>
</dbReference>
<dbReference type="PANTHER" id="PTHR30194">
    <property type="entry name" value="CROSSOVER JUNCTION ENDODEOXYRIBONUCLEASE RUVC"/>
    <property type="match status" value="1"/>
</dbReference>
<dbReference type="PANTHER" id="PTHR30194:SF3">
    <property type="entry name" value="CROSSOVER JUNCTION ENDODEOXYRIBONUCLEASE RUVC"/>
    <property type="match status" value="1"/>
</dbReference>
<dbReference type="Pfam" id="PF02075">
    <property type="entry name" value="RuvC"/>
    <property type="match status" value="1"/>
</dbReference>
<dbReference type="PRINTS" id="PR00696">
    <property type="entry name" value="RSOLVASERUVC"/>
</dbReference>
<dbReference type="SUPFAM" id="SSF53098">
    <property type="entry name" value="Ribonuclease H-like"/>
    <property type="match status" value="1"/>
</dbReference>
<dbReference type="PROSITE" id="PS01321">
    <property type="entry name" value="RUVC"/>
    <property type="match status" value="1"/>
</dbReference>
<reference key="1">
    <citation type="journal article" date="2013" name="Proc. Natl. Acad. Sci. U.S.A.">
        <title>Polynucleobacter necessarius, a model for genome reduction in both free-living and symbiotic bacteria.</title>
        <authorList>
            <person name="Boscaro V."/>
            <person name="Felletti M."/>
            <person name="Vannini C."/>
            <person name="Ackerman M.S."/>
            <person name="Chain P.S."/>
            <person name="Malfatti S."/>
            <person name="Vergez L.M."/>
            <person name="Shin M."/>
            <person name="Doak T.G."/>
            <person name="Lynch M."/>
            <person name="Petroni G."/>
        </authorList>
    </citation>
    <scope>NUCLEOTIDE SEQUENCE [LARGE SCALE GENOMIC DNA]</scope>
    <source>
        <strain>STIR1</strain>
    </source>
</reference>
<protein>
    <recommendedName>
        <fullName evidence="1">Crossover junction endodeoxyribonuclease RuvC</fullName>
        <ecNumber evidence="1">3.1.21.10</ecNumber>
    </recommendedName>
    <alternativeName>
        <fullName evidence="1">Holliday junction nuclease RuvC</fullName>
    </alternativeName>
    <alternativeName>
        <fullName evidence="1">Holliday junction resolvase RuvC</fullName>
    </alternativeName>
</protein>
<keyword id="KW-0963">Cytoplasm</keyword>
<keyword id="KW-0227">DNA damage</keyword>
<keyword id="KW-0233">DNA recombination</keyword>
<keyword id="KW-0234">DNA repair</keyword>
<keyword id="KW-0238">DNA-binding</keyword>
<keyword id="KW-0255">Endonuclease</keyword>
<keyword id="KW-0378">Hydrolase</keyword>
<keyword id="KW-0460">Magnesium</keyword>
<keyword id="KW-0479">Metal-binding</keyword>
<keyword id="KW-0540">Nuclease</keyword>
<sequence length="168" mass="17883">MRWIGIDPGLCTTGFGIIDVDGQKLTYVASGTIESGDPAKRLGALYAGLKEVLETYRPESAAIEEVFLNVNPRSTLMLGQARGAVIAALVSEKLPVAEYSALRVKQAIVGTGRAAKPQVQEMVKRLLRLNRAPGTDASDALGVAICAAHHAQIPNVFSTTLTPKKRSK</sequence>
<evidence type="ECO:0000255" key="1">
    <source>
        <dbReference type="HAMAP-Rule" id="MF_00034"/>
    </source>
</evidence>
<organism>
    <name type="scientific">Polynucleobacter necessarius subsp. necessarius (strain STIR1)</name>
    <dbReference type="NCBI Taxonomy" id="452638"/>
    <lineage>
        <taxon>Bacteria</taxon>
        <taxon>Pseudomonadati</taxon>
        <taxon>Pseudomonadota</taxon>
        <taxon>Betaproteobacteria</taxon>
        <taxon>Burkholderiales</taxon>
        <taxon>Burkholderiaceae</taxon>
        <taxon>Polynucleobacter</taxon>
    </lineage>
</organism>
<comment type="function">
    <text evidence="1">The RuvA-RuvB-RuvC complex processes Holliday junction (HJ) DNA during genetic recombination and DNA repair. Endonuclease that resolves HJ intermediates. Cleaves cruciform DNA by making single-stranded nicks across the HJ at symmetrical positions within the homologous arms, yielding a 5'-phosphate and a 3'-hydroxyl group; requires a central core of homology in the junction. The consensus cleavage sequence is 5'-(A/T)TT(C/G)-3'. Cleavage occurs on the 3'-side of the TT dinucleotide at the point of strand exchange. HJ branch migration catalyzed by RuvA-RuvB allows RuvC to scan DNA until it finds its consensus sequence, where it cleaves and resolves the cruciform DNA.</text>
</comment>
<comment type="catalytic activity">
    <reaction evidence="1">
        <text>Endonucleolytic cleavage at a junction such as a reciprocal single-stranded crossover between two homologous DNA duplexes (Holliday junction).</text>
        <dbReference type="EC" id="3.1.21.10"/>
    </reaction>
</comment>
<comment type="cofactor">
    <cofactor evidence="1">
        <name>Mg(2+)</name>
        <dbReference type="ChEBI" id="CHEBI:18420"/>
    </cofactor>
    <text evidence="1">Binds 2 Mg(2+) ion per subunit.</text>
</comment>
<comment type="subunit">
    <text evidence="1">Homodimer which binds Holliday junction (HJ) DNA. The HJ becomes 2-fold symmetrical on binding to RuvC with unstacked arms; it has a different conformation from HJ DNA in complex with RuvA. In the full resolvosome a probable DNA-RuvA(4)-RuvB(12)-RuvC(2) complex forms which resolves the HJ.</text>
</comment>
<comment type="subcellular location">
    <subcellularLocation>
        <location evidence="1">Cytoplasm</location>
    </subcellularLocation>
</comment>
<comment type="similarity">
    <text evidence="1">Belongs to the RuvC family.</text>
</comment>
<accession>B1XS24</accession>
<name>RUVC_POLNS</name>
<gene>
    <name evidence="1" type="primary">ruvC</name>
    <name type="ordered locus">Pnec_1582</name>
</gene>
<feature type="chain" id="PRO_1000090545" description="Crossover junction endodeoxyribonuclease RuvC">
    <location>
        <begin position="1"/>
        <end position="168"/>
    </location>
</feature>
<feature type="active site" evidence="1">
    <location>
        <position position="7"/>
    </location>
</feature>
<feature type="active site" evidence="1">
    <location>
        <position position="64"/>
    </location>
</feature>
<feature type="active site" evidence="1">
    <location>
        <position position="136"/>
    </location>
</feature>
<feature type="binding site" evidence="1">
    <location>
        <position position="7"/>
    </location>
    <ligand>
        <name>Mg(2+)</name>
        <dbReference type="ChEBI" id="CHEBI:18420"/>
        <label>1</label>
    </ligand>
</feature>
<feature type="binding site" evidence="1">
    <location>
        <position position="64"/>
    </location>
    <ligand>
        <name>Mg(2+)</name>
        <dbReference type="ChEBI" id="CHEBI:18420"/>
        <label>2</label>
    </ligand>
</feature>
<feature type="binding site" evidence="1">
    <location>
        <position position="136"/>
    </location>
    <ligand>
        <name>Mg(2+)</name>
        <dbReference type="ChEBI" id="CHEBI:18420"/>
        <label>1</label>
    </ligand>
</feature>